<gene>
    <name evidence="1" type="primary">lipB</name>
    <name type="ordered locus">Sfum_1675</name>
</gene>
<proteinExistence type="inferred from homology"/>
<accession>A0LIW0</accession>
<sequence>MLRKAFLLNLGMLDYNRSRDLQKRLHARRVIDVVPDTVLLVEHPHTITLGRRGNRLCLKASPEDLERMGIPVVQVERGGDVTYHGPGQAVVYPILHLRESGLSLADYVSALESLVIGVLGDFGIKGRRNGKNRGVWVGGDKIASVGIAVSRWVSYHGIALNCTTNLEYFGLIDACGLKGVEMTSISRLLGKDVSGSEVHRSIAFHLRRLFERDWQERTLPEIEALLND</sequence>
<dbReference type="EC" id="2.3.1.181" evidence="1"/>
<dbReference type="EMBL" id="CP000478">
    <property type="protein sequence ID" value="ABK17362.1"/>
    <property type="molecule type" value="Genomic_DNA"/>
</dbReference>
<dbReference type="RefSeq" id="WP_011698532.1">
    <property type="nucleotide sequence ID" value="NC_008554.1"/>
</dbReference>
<dbReference type="SMR" id="A0LIW0"/>
<dbReference type="FunCoup" id="A0LIW0">
    <property type="interactions" value="324"/>
</dbReference>
<dbReference type="STRING" id="335543.Sfum_1675"/>
<dbReference type="KEGG" id="sfu:Sfum_1675"/>
<dbReference type="eggNOG" id="COG0321">
    <property type="taxonomic scope" value="Bacteria"/>
</dbReference>
<dbReference type="HOGENOM" id="CLU_035168_1_3_7"/>
<dbReference type="InParanoid" id="A0LIW0"/>
<dbReference type="UniPathway" id="UPA00538">
    <property type="reaction ID" value="UER00592"/>
</dbReference>
<dbReference type="Proteomes" id="UP000001784">
    <property type="component" value="Chromosome"/>
</dbReference>
<dbReference type="GO" id="GO:0005737">
    <property type="term" value="C:cytoplasm"/>
    <property type="evidence" value="ECO:0007669"/>
    <property type="project" value="UniProtKB-SubCell"/>
</dbReference>
<dbReference type="GO" id="GO:0033819">
    <property type="term" value="F:lipoyl(octanoyl) transferase activity"/>
    <property type="evidence" value="ECO:0007669"/>
    <property type="project" value="UniProtKB-EC"/>
</dbReference>
<dbReference type="GO" id="GO:0036211">
    <property type="term" value="P:protein modification process"/>
    <property type="evidence" value="ECO:0007669"/>
    <property type="project" value="InterPro"/>
</dbReference>
<dbReference type="CDD" id="cd16444">
    <property type="entry name" value="LipB"/>
    <property type="match status" value="1"/>
</dbReference>
<dbReference type="Gene3D" id="3.30.930.10">
    <property type="entry name" value="Bira Bifunctional Protein, Domain 2"/>
    <property type="match status" value="1"/>
</dbReference>
<dbReference type="HAMAP" id="MF_00013">
    <property type="entry name" value="LipB"/>
    <property type="match status" value="1"/>
</dbReference>
<dbReference type="InterPro" id="IPR045864">
    <property type="entry name" value="aa-tRNA-synth_II/BPL/LPL"/>
</dbReference>
<dbReference type="InterPro" id="IPR004143">
    <property type="entry name" value="BPL_LPL_catalytic"/>
</dbReference>
<dbReference type="InterPro" id="IPR000544">
    <property type="entry name" value="Octanoyltransferase"/>
</dbReference>
<dbReference type="InterPro" id="IPR020605">
    <property type="entry name" value="Octanoyltransferase_CS"/>
</dbReference>
<dbReference type="NCBIfam" id="TIGR00214">
    <property type="entry name" value="lipB"/>
    <property type="match status" value="1"/>
</dbReference>
<dbReference type="NCBIfam" id="NF010925">
    <property type="entry name" value="PRK14345.1"/>
    <property type="match status" value="1"/>
</dbReference>
<dbReference type="PANTHER" id="PTHR10993:SF7">
    <property type="entry name" value="LIPOYLTRANSFERASE 2, MITOCHONDRIAL-RELATED"/>
    <property type="match status" value="1"/>
</dbReference>
<dbReference type="PANTHER" id="PTHR10993">
    <property type="entry name" value="OCTANOYLTRANSFERASE"/>
    <property type="match status" value="1"/>
</dbReference>
<dbReference type="Pfam" id="PF21948">
    <property type="entry name" value="LplA-B_cat"/>
    <property type="match status" value="1"/>
</dbReference>
<dbReference type="PIRSF" id="PIRSF016262">
    <property type="entry name" value="LPLase"/>
    <property type="match status" value="1"/>
</dbReference>
<dbReference type="SUPFAM" id="SSF55681">
    <property type="entry name" value="Class II aaRS and biotin synthetases"/>
    <property type="match status" value="1"/>
</dbReference>
<dbReference type="PROSITE" id="PS51733">
    <property type="entry name" value="BPL_LPL_CATALYTIC"/>
    <property type="match status" value="1"/>
</dbReference>
<dbReference type="PROSITE" id="PS01313">
    <property type="entry name" value="LIPB"/>
    <property type="match status" value="1"/>
</dbReference>
<protein>
    <recommendedName>
        <fullName evidence="1">Octanoyltransferase</fullName>
        <ecNumber evidence="1">2.3.1.181</ecNumber>
    </recommendedName>
    <alternativeName>
        <fullName evidence="1">Lipoate-protein ligase B</fullName>
    </alternativeName>
    <alternativeName>
        <fullName evidence="1">Lipoyl/octanoyl transferase</fullName>
    </alternativeName>
    <alternativeName>
        <fullName evidence="1">Octanoyl-[acyl-carrier-protein]-protein N-octanoyltransferase</fullName>
    </alternativeName>
</protein>
<evidence type="ECO:0000255" key="1">
    <source>
        <dbReference type="HAMAP-Rule" id="MF_00013"/>
    </source>
</evidence>
<evidence type="ECO:0000255" key="2">
    <source>
        <dbReference type="PROSITE-ProRule" id="PRU01067"/>
    </source>
</evidence>
<keyword id="KW-0012">Acyltransferase</keyword>
<keyword id="KW-0963">Cytoplasm</keyword>
<keyword id="KW-1185">Reference proteome</keyword>
<keyword id="KW-0808">Transferase</keyword>
<feature type="chain" id="PRO_0000321672" description="Octanoyltransferase">
    <location>
        <begin position="1"/>
        <end position="228"/>
    </location>
</feature>
<feature type="domain" description="BPL/LPL catalytic" evidence="2">
    <location>
        <begin position="32"/>
        <end position="214"/>
    </location>
</feature>
<feature type="active site" description="Acyl-thioester intermediate" evidence="1">
    <location>
        <position position="175"/>
    </location>
</feature>
<feature type="binding site" evidence="1">
    <location>
        <begin position="77"/>
        <end position="84"/>
    </location>
    <ligand>
        <name>substrate</name>
    </ligand>
</feature>
<feature type="binding site" evidence="1">
    <location>
        <begin position="144"/>
        <end position="146"/>
    </location>
    <ligand>
        <name>substrate</name>
    </ligand>
</feature>
<feature type="binding site" evidence="1">
    <location>
        <begin position="157"/>
        <end position="159"/>
    </location>
    <ligand>
        <name>substrate</name>
    </ligand>
</feature>
<feature type="site" description="Lowers pKa of active site Cys" evidence="1">
    <location>
        <position position="141"/>
    </location>
</feature>
<comment type="function">
    <text evidence="1">Catalyzes the transfer of endogenously produced octanoic acid from octanoyl-acyl-carrier-protein onto the lipoyl domains of lipoate-dependent enzymes. Lipoyl-ACP can also act as a substrate although octanoyl-ACP is likely to be the physiological substrate.</text>
</comment>
<comment type="catalytic activity">
    <reaction evidence="1">
        <text>octanoyl-[ACP] + L-lysyl-[protein] = N(6)-octanoyl-L-lysyl-[protein] + holo-[ACP] + H(+)</text>
        <dbReference type="Rhea" id="RHEA:17665"/>
        <dbReference type="Rhea" id="RHEA-COMP:9636"/>
        <dbReference type="Rhea" id="RHEA-COMP:9685"/>
        <dbReference type="Rhea" id="RHEA-COMP:9752"/>
        <dbReference type="Rhea" id="RHEA-COMP:9928"/>
        <dbReference type="ChEBI" id="CHEBI:15378"/>
        <dbReference type="ChEBI" id="CHEBI:29969"/>
        <dbReference type="ChEBI" id="CHEBI:64479"/>
        <dbReference type="ChEBI" id="CHEBI:78463"/>
        <dbReference type="ChEBI" id="CHEBI:78809"/>
        <dbReference type="EC" id="2.3.1.181"/>
    </reaction>
</comment>
<comment type="pathway">
    <text evidence="1">Protein modification; protein lipoylation via endogenous pathway; protein N(6)-(lipoyl)lysine from octanoyl-[acyl-carrier-protein]: step 1/2.</text>
</comment>
<comment type="subcellular location">
    <subcellularLocation>
        <location evidence="1">Cytoplasm</location>
    </subcellularLocation>
</comment>
<comment type="miscellaneous">
    <text evidence="1">In the reaction, the free carboxyl group of octanoic acid is attached via an amide linkage to the epsilon-amino group of a specific lysine residue of lipoyl domains of lipoate-dependent enzymes.</text>
</comment>
<comment type="similarity">
    <text evidence="1">Belongs to the LipB family.</text>
</comment>
<name>LIPB_SYNFM</name>
<reference key="1">
    <citation type="submission" date="2006-10" db="EMBL/GenBank/DDBJ databases">
        <title>Complete sequence of Syntrophobacter fumaroxidans MPOB.</title>
        <authorList>
            <consortium name="US DOE Joint Genome Institute"/>
            <person name="Copeland A."/>
            <person name="Lucas S."/>
            <person name="Lapidus A."/>
            <person name="Barry K."/>
            <person name="Detter J.C."/>
            <person name="Glavina del Rio T."/>
            <person name="Hammon N."/>
            <person name="Israni S."/>
            <person name="Pitluck S."/>
            <person name="Goltsman E.G."/>
            <person name="Martinez M."/>
            <person name="Schmutz J."/>
            <person name="Larimer F."/>
            <person name="Land M."/>
            <person name="Hauser L."/>
            <person name="Kyrpides N."/>
            <person name="Kim E."/>
            <person name="Boone D.R."/>
            <person name="Brockman F."/>
            <person name="Culley D."/>
            <person name="Ferry J."/>
            <person name="Gunsalus R."/>
            <person name="McInerney M.J."/>
            <person name="Morrison M."/>
            <person name="Plugge C."/>
            <person name="Rohlin L."/>
            <person name="Scholten J."/>
            <person name="Sieber J."/>
            <person name="Stams A.J.M."/>
            <person name="Worm P."/>
            <person name="Henstra A.M."/>
            <person name="Richardson P."/>
        </authorList>
    </citation>
    <scope>NUCLEOTIDE SEQUENCE [LARGE SCALE GENOMIC DNA]</scope>
    <source>
        <strain>DSM 10017 / MPOB</strain>
    </source>
</reference>
<organism>
    <name type="scientific">Syntrophobacter fumaroxidans (strain DSM 10017 / MPOB)</name>
    <dbReference type="NCBI Taxonomy" id="335543"/>
    <lineage>
        <taxon>Bacteria</taxon>
        <taxon>Pseudomonadati</taxon>
        <taxon>Thermodesulfobacteriota</taxon>
        <taxon>Syntrophobacteria</taxon>
        <taxon>Syntrophobacterales</taxon>
        <taxon>Syntrophobacteraceae</taxon>
        <taxon>Syntrophobacter</taxon>
    </lineage>
</organism>